<evidence type="ECO:0000250" key="1">
    <source>
        <dbReference type="UniProtKB" id="P9WJW9"/>
    </source>
</evidence>
<evidence type="ECO:0000255" key="2"/>
<evidence type="ECO:0000305" key="3"/>
<accession>P9WJW8</accession>
<accession>L0TCL0</accession>
<accession>O53186</accession>
<accession>Q7D739</accession>
<dbReference type="EMBL" id="AE000516">
    <property type="protein sequence ID" value="AAK46834.1"/>
    <property type="status" value="ALT_INIT"/>
    <property type="molecule type" value="Genomic_DNA"/>
</dbReference>
<dbReference type="PIR" id="B70865">
    <property type="entry name" value="B70865"/>
</dbReference>
<dbReference type="RefSeq" id="WP_003412642.1">
    <property type="nucleotide sequence ID" value="NZ_KK341227.1"/>
</dbReference>
<dbReference type="SMR" id="P9WJW8"/>
<dbReference type="GeneID" id="45426449"/>
<dbReference type="KEGG" id="mtc:MT2534"/>
<dbReference type="PATRIC" id="fig|83331.31.peg.2735"/>
<dbReference type="HOGENOM" id="CLU_000960_28_2_11"/>
<dbReference type="Proteomes" id="UP000001020">
    <property type="component" value="Chromosome"/>
</dbReference>
<dbReference type="GO" id="GO:0005886">
    <property type="term" value="C:plasma membrane"/>
    <property type="evidence" value="ECO:0007669"/>
    <property type="project" value="UniProtKB-SubCell"/>
</dbReference>
<dbReference type="GO" id="GO:0022857">
    <property type="term" value="F:transmembrane transporter activity"/>
    <property type="evidence" value="ECO:0007669"/>
    <property type="project" value="InterPro"/>
</dbReference>
<dbReference type="GO" id="GO:0046677">
    <property type="term" value="P:response to antibiotic"/>
    <property type="evidence" value="ECO:0007669"/>
    <property type="project" value="UniProtKB-KW"/>
</dbReference>
<dbReference type="CDD" id="cd17321">
    <property type="entry name" value="MFS_MMR_MDR_like"/>
    <property type="match status" value="1"/>
</dbReference>
<dbReference type="Gene3D" id="1.20.1250.20">
    <property type="entry name" value="MFS general substrate transporter like domains"/>
    <property type="match status" value="1"/>
</dbReference>
<dbReference type="Gene3D" id="1.20.1720.10">
    <property type="entry name" value="Multidrug resistance protein D"/>
    <property type="match status" value="1"/>
</dbReference>
<dbReference type="InterPro" id="IPR011701">
    <property type="entry name" value="MFS"/>
</dbReference>
<dbReference type="InterPro" id="IPR020846">
    <property type="entry name" value="MFS_dom"/>
</dbReference>
<dbReference type="InterPro" id="IPR036259">
    <property type="entry name" value="MFS_trans_sf"/>
</dbReference>
<dbReference type="PANTHER" id="PTHR42718">
    <property type="entry name" value="MAJOR FACILITATOR SUPERFAMILY MULTIDRUG TRANSPORTER MFSC"/>
    <property type="match status" value="1"/>
</dbReference>
<dbReference type="PANTHER" id="PTHR42718:SF9">
    <property type="entry name" value="MAJOR FACILITATOR SUPERFAMILY MULTIDRUG TRANSPORTER MFSC"/>
    <property type="match status" value="1"/>
</dbReference>
<dbReference type="Pfam" id="PF07690">
    <property type="entry name" value="MFS_1"/>
    <property type="match status" value="1"/>
</dbReference>
<dbReference type="SUPFAM" id="SSF103473">
    <property type="entry name" value="MFS general substrate transporter"/>
    <property type="match status" value="1"/>
</dbReference>
<dbReference type="PROSITE" id="PS50850">
    <property type="entry name" value="MFS"/>
    <property type="match status" value="1"/>
</dbReference>
<reference key="1">
    <citation type="journal article" date="2002" name="J. Bacteriol.">
        <title>Whole-genome comparison of Mycobacterium tuberculosis clinical and laboratory strains.</title>
        <authorList>
            <person name="Fleischmann R.D."/>
            <person name="Alland D."/>
            <person name="Eisen J.A."/>
            <person name="Carpenter L."/>
            <person name="White O."/>
            <person name="Peterson J.D."/>
            <person name="DeBoy R.T."/>
            <person name="Dodson R.J."/>
            <person name="Gwinn M.L."/>
            <person name="Haft D.H."/>
            <person name="Hickey E.K."/>
            <person name="Kolonay J.F."/>
            <person name="Nelson W.C."/>
            <person name="Umayam L.A."/>
            <person name="Ermolaeva M.D."/>
            <person name="Salzberg S.L."/>
            <person name="Delcher A."/>
            <person name="Utterback T.R."/>
            <person name="Weidman J.F."/>
            <person name="Khouri H.M."/>
            <person name="Gill J."/>
            <person name="Mikula A."/>
            <person name="Bishai W."/>
            <person name="Jacobs W.R. Jr."/>
            <person name="Venter J.C."/>
            <person name="Fraser C.M."/>
        </authorList>
    </citation>
    <scope>NUCLEOTIDE SEQUENCE [LARGE SCALE GENOMIC DNA]</scope>
    <source>
        <strain>CDC 1551 / Oshkosh</strain>
    </source>
</reference>
<gene>
    <name evidence="1" type="primary">jefA</name>
    <name type="ordered locus">MT2534</name>
</gene>
<comment type="function">
    <text evidence="1">Involved in resistance to ethambutol and isoniazid.</text>
</comment>
<comment type="subcellular location">
    <subcellularLocation>
        <location evidence="3">Cell inner membrane</location>
        <topology evidence="2">Multi-pass membrane protein</topology>
    </subcellularLocation>
</comment>
<comment type="similarity">
    <text evidence="3">Belongs to the major facilitator superfamily.</text>
</comment>
<comment type="sequence caution" evidence="3">
    <conflict type="erroneous initiation">
        <sequence resource="EMBL-CDS" id="AAK46834"/>
    </conflict>
</comment>
<feature type="chain" id="PRO_0000427757" description="Drug efflux pump JefA">
    <location>
        <begin position="1"/>
        <end position="508"/>
    </location>
</feature>
<feature type="transmembrane region" description="Helical" evidence="2">
    <location>
        <begin position="9"/>
        <end position="29"/>
    </location>
</feature>
<feature type="transmembrane region" description="Helical" evidence="2">
    <location>
        <begin position="46"/>
        <end position="66"/>
    </location>
</feature>
<feature type="transmembrane region" description="Helical" evidence="2">
    <location>
        <begin position="75"/>
        <end position="95"/>
    </location>
</feature>
<feature type="transmembrane region" description="Helical" evidence="2">
    <location>
        <begin position="104"/>
        <end position="124"/>
    </location>
</feature>
<feature type="transmembrane region" description="Helical" evidence="2">
    <location>
        <begin position="136"/>
        <end position="156"/>
    </location>
</feature>
<feature type="transmembrane region" description="Helical" evidence="2">
    <location>
        <begin position="163"/>
        <end position="183"/>
    </location>
</feature>
<feature type="transmembrane region" description="Helical" evidence="2">
    <location>
        <begin position="194"/>
        <end position="214"/>
    </location>
</feature>
<feature type="transmembrane region" description="Helical" evidence="2">
    <location>
        <begin position="222"/>
        <end position="242"/>
    </location>
</feature>
<feature type="transmembrane region" description="Helical" evidence="2">
    <location>
        <begin position="265"/>
        <end position="285"/>
    </location>
</feature>
<feature type="transmembrane region" description="Helical" evidence="2">
    <location>
        <begin position="297"/>
        <end position="317"/>
    </location>
</feature>
<feature type="transmembrane region" description="Helical" evidence="2">
    <location>
        <begin position="328"/>
        <end position="348"/>
    </location>
</feature>
<feature type="transmembrane region" description="Helical" evidence="2">
    <location>
        <begin position="354"/>
        <end position="374"/>
    </location>
</feature>
<feature type="transmembrane region" description="Helical" evidence="2">
    <location>
        <begin position="399"/>
        <end position="419"/>
    </location>
</feature>
<feature type="transmembrane region" description="Helical" evidence="2">
    <location>
        <begin position="479"/>
        <end position="499"/>
    </location>
</feature>
<name>JEFA_MYCTO</name>
<protein>
    <recommendedName>
        <fullName evidence="1">Drug efflux pump JefA</fullName>
    </recommendedName>
</protein>
<proteinExistence type="inferred from homology"/>
<organism>
    <name type="scientific">Mycobacterium tuberculosis (strain CDC 1551 / Oshkosh)</name>
    <dbReference type="NCBI Taxonomy" id="83331"/>
    <lineage>
        <taxon>Bacteria</taxon>
        <taxon>Bacillati</taxon>
        <taxon>Actinomycetota</taxon>
        <taxon>Actinomycetes</taxon>
        <taxon>Mycobacteriales</taxon>
        <taxon>Mycobacteriaceae</taxon>
        <taxon>Mycobacterium</taxon>
        <taxon>Mycobacterium tuberculosis complex</taxon>
    </lineage>
</organism>
<keyword id="KW-0046">Antibiotic resistance</keyword>
<keyword id="KW-0997">Cell inner membrane</keyword>
<keyword id="KW-1003">Cell membrane</keyword>
<keyword id="KW-0472">Membrane</keyword>
<keyword id="KW-1185">Reference proteome</keyword>
<keyword id="KW-0812">Transmembrane</keyword>
<keyword id="KW-1133">Transmembrane helix</keyword>
<keyword id="KW-0813">Transport</keyword>
<sequence>MTPRQRLTVLATGLGIFMVFVDVNIVNVALPSIQKVFHTGEQGLQWAVAGYSLGMAAVLMSCALLGDRYGRRRSFVFGVTLFVVSSIVCVLPVSLAVFTVARVIQGLGAAFISVLSLALLSHSFPNPRMKARAISNWMAIGMVGAASAPALGGLMVDGLGWRSVFLVNVPLGAIVWLLTLVGVDESQDPEPTQLDWVGQLTLIPAVALIAYTIIEAPRFDRQSAGFVAALLLAAGVLLWLFVRHEHRAAFPLVDLKLFAEPLYRSVLIVYFVVMSCFFGTLMVITQHFQNVRDLSPLHAGLMMLPVPAGFGVASLLAGRAVNKWGPQLPVLTCLAAMFIGLAIFAISMDHAHPVALVGLTIFGAGAGGCATPLLHLGMTKVDDGRAGMAAGMLNLQRSLGGIFGVAFLGTIVAAWLGAALPNTMADEIPDPIARAIVVDVIVDSANPHAHAAFIGPGHRITAAQEDEIVLAADAVFVSGIKLALGGAAVLLTGAFVLGWTRFPRTPAS</sequence>